<proteinExistence type="inferred from homology"/>
<protein>
    <recommendedName>
        <fullName>Prepilin peptidase-dependent protein C</fullName>
    </recommendedName>
</protein>
<evidence type="ECO:0000250" key="1"/>
<evidence type="ECO:0000255" key="2"/>
<evidence type="ECO:0000255" key="3">
    <source>
        <dbReference type="PROSITE-ProRule" id="PRU01070"/>
    </source>
</evidence>
<evidence type="ECO:0000305" key="4"/>
<keyword id="KW-0472">Membrane</keyword>
<keyword id="KW-0488">Methylation</keyword>
<keyword id="KW-1185">Reference proteome</keyword>
<keyword id="KW-0812">Transmembrane</keyword>
<keyword id="KW-1133">Transmembrane helix</keyword>
<feature type="propeptide" id="PRO_0000024278" evidence="1">
    <location>
        <begin position="1"/>
        <end position="10"/>
    </location>
</feature>
<feature type="chain" id="PRO_0000024279" description="Prepilin peptidase-dependent protein C">
    <location>
        <begin position="11"/>
        <end position="107"/>
    </location>
</feature>
<feature type="transmembrane region" description="Helical" evidence="4">
    <location>
        <begin position="11"/>
        <end position="30"/>
    </location>
</feature>
<feature type="modified residue" description="N-methylphenylalanine" evidence="3">
    <location>
        <position position="11"/>
    </location>
</feature>
<dbReference type="EMBL" id="X03966">
    <property type="protein sequence ID" value="CAA27603.1"/>
    <property type="molecule type" value="Genomic_DNA"/>
</dbReference>
<dbReference type="EMBL" id="U29581">
    <property type="protein sequence ID" value="AAB40470.1"/>
    <property type="molecule type" value="Genomic_DNA"/>
</dbReference>
<dbReference type="EMBL" id="U00096">
    <property type="protein sequence ID" value="AAC75862.1"/>
    <property type="molecule type" value="Genomic_DNA"/>
</dbReference>
<dbReference type="EMBL" id="AP009048">
    <property type="protein sequence ID" value="BAE76892.1"/>
    <property type="molecule type" value="Genomic_DNA"/>
</dbReference>
<dbReference type="PIR" id="E24137">
    <property type="entry name" value="QQEC12"/>
</dbReference>
<dbReference type="RefSeq" id="NP_417300.1">
    <property type="nucleotide sequence ID" value="NC_000913.3"/>
</dbReference>
<dbReference type="RefSeq" id="WP_001276460.1">
    <property type="nucleotide sequence ID" value="NZ_SSZK01000003.1"/>
</dbReference>
<dbReference type="SMR" id="P08372"/>
<dbReference type="BioGRID" id="4261796">
    <property type="interactions" value="153"/>
</dbReference>
<dbReference type="FunCoup" id="P08372">
    <property type="interactions" value="86"/>
</dbReference>
<dbReference type="STRING" id="511145.b2823"/>
<dbReference type="PaxDb" id="511145-b2823"/>
<dbReference type="EnsemblBacteria" id="AAC75862">
    <property type="protein sequence ID" value="AAC75862"/>
    <property type="gene ID" value="b2823"/>
</dbReference>
<dbReference type="GeneID" id="945797"/>
<dbReference type="KEGG" id="ecj:JW2791"/>
<dbReference type="KEGG" id="eco:b2823"/>
<dbReference type="KEGG" id="ecoc:C3026_15500"/>
<dbReference type="PATRIC" id="fig|511145.12.peg.2921"/>
<dbReference type="EchoBASE" id="EB1143"/>
<dbReference type="eggNOG" id="COG4967">
    <property type="taxonomic scope" value="Bacteria"/>
</dbReference>
<dbReference type="HOGENOM" id="CLU_143487_1_0_6"/>
<dbReference type="InParanoid" id="P08372"/>
<dbReference type="OMA" id="QYRQLWH"/>
<dbReference type="OrthoDB" id="6561530at2"/>
<dbReference type="PhylomeDB" id="P08372"/>
<dbReference type="BioCyc" id="EcoCyc:EG11154-MONOMER"/>
<dbReference type="PRO" id="PR:P08372"/>
<dbReference type="Proteomes" id="UP000000625">
    <property type="component" value="Chromosome"/>
</dbReference>
<dbReference type="GO" id="GO:0016020">
    <property type="term" value="C:membrane"/>
    <property type="evidence" value="ECO:0007669"/>
    <property type="project" value="UniProtKB-SubCell"/>
</dbReference>
<dbReference type="InterPro" id="IPR012902">
    <property type="entry name" value="N_methyl_site"/>
</dbReference>
<dbReference type="InterPro" id="IPR022204">
    <property type="entry name" value="PpdC-like_C"/>
</dbReference>
<dbReference type="NCBIfam" id="TIGR02532">
    <property type="entry name" value="IV_pilin_GFxxxE"/>
    <property type="match status" value="1"/>
</dbReference>
<dbReference type="NCBIfam" id="NF007660">
    <property type="entry name" value="PRK10332.1"/>
    <property type="match status" value="1"/>
</dbReference>
<dbReference type="Pfam" id="PF07963">
    <property type="entry name" value="N_methyl"/>
    <property type="match status" value="1"/>
</dbReference>
<dbReference type="Pfam" id="PF12528">
    <property type="entry name" value="T2SSppdC"/>
    <property type="match status" value="1"/>
</dbReference>
<dbReference type="PROSITE" id="PS00409">
    <property type="entry name" value="PROKAR_NTER_METHYL"/>
    <property type="match status" value="1"/>
</dbReference>
<comment type="function">
    <text>Not yet known.</text>
</comment>
<comment type="subcellular location">
    <subcellularLocation>
        <location evidence="2">Membrane</location>
        <topology evidence="2">Single-pass membrane protein</topology>
    </subcellularLocation>
</comment>
<gene>
    <name type="primary">ppdC</name>
    <name type="synonym">ygdA</name>
    <name type="ordered locus">b2823</name>
    <name type="ordered locus">JW2791</name>
</gene>
<sequence length="107" mass="12004">MSASLKNQQGFSLPEVMLAMVLMVMIVTALSGFQRTLMNSLASRNQYQQLWRHGWQQTQLRAISPPANWQVNRMQTSQAGCVSISVTLVSPGGREGEMTRLHCPNRQ</sequence>
<accession>P08372</accession>
<accession>Q2MA14</accession>
<reference key="1">
    <citation type="journal article" date="1986" name="Nucleic Acids Res.">
        <title>Complete nucleotide sequence of the Escherichia coli recC gene and of the thyA-recC intergenic region.</title>
        <authorList>
            <person name="Finch P.W."/>
            <person name="Wilson R.E."/>
            <person name="Brown K."/>
            <person name="Hickson I.D."/>
            <person name="Tomkinson A.E."/>
            <person name="Emmerson P.T."/>
        </authorList>
    </citation>
    <scope>NUCLEOTIDE SEQUENCE [GENOMIC DNA]</scope>
</reference>
<reference key="2">
    <citation type="journal article" date="1997" name="Science">
        <title>The complete genome sequence of Escherichia coli K-12.</title>
        <authorList>
            <person name="Blattner F.R."/>
            <person name="Plunkett G. III"/>
            <person name="Bloch C.A."/>
            <person name="Perna N.T."/>
            <person name="Burland V."/>
            <person name="Riley M."/>
            <person name="Collado-Vides J."/>
            <person name="Glasner J.D."/>
            <person name="Rode C.K."/>
            <person name="Mayhew G.F."/>
            <person name="Gregor J."/>
            <person name="Davis N.W."/>
            <person name="Kirkpatrick H.A."/>
            <person name="Goeden M.A."/>
            <person name="Rose D.J."/>
            <person name="Mau B."/>
            <person name="Shao Y."/>
        </authorList>
    </citation>
    <scope>NUCLEOTIDE SEQUENCE [LARGE SCALE GENOMIC DNA]</scope>
    <source>
        <strain>K12 / MG1655 / ATCC 47076</strain>
    </source>
</reference>
<reference key="3">
    <citation type="journal article" date="2006" name="Mol. Syst. Biol.">
        <title>Highly accurate genome sequences of Escherichia coli K-12 strains MG1655 and W3110.</title>
        <authorList>
            <person name="Hayashi K."/>
            <person name="Morooka N."/>
            <person name="Yamamoto Y."/>
            <person name="Fujita K."/>
            <person name="Isono K."/>
            <person name="Choi S."/>
            <person name="Ohtsubo E."/>
            <person name="Baba T."/>
            <person name="Wanner B.L."/>
            <person name="Mori H."/>
            <person name="Horiuchi T."/>
        </authorList>
    </citation>
    <scope>NUCLEOTIDE SEQUENCE [LARGE SCALE GENOMIC DNA]</scope>
    <source>
        <strain>K12 / W3110 / ATCC 27325 / DSM 5911</strain>
    </source>
</reference>
<reference key="4">
    <citation type="journal article" date="1993" name="Mol. Microbiol.">
        <title>Common components in the assembly of type 4 fimbriae, DNA transfer systems, filamentous phage and protein-secretion apparatus: a general system for the formation of surface-associated protein complexes.</title>
        <authorList>
            <person name="Hobbs M."/>
            <person name="Mattick J.S."/>
        </authorList>
    </citation>
    <scope>IDENTIFICATION</scope>
</reference>
<organism>
    <name type="scientific">Escherichia coli (strain K12)</name>
    <dbReference type="NCBI Taxonomy" id="83333"/>
    <lineage>
        <taxon>Bacteria</taxon>
        <taxon>Pseudomonadati</taxon>
        <taxon>Pseudomonadota</taxon>
        <taxon>Gammaproteobacteria</taxon>
        <taxon>Enterobacterales</taxon>
        <taxon>Enterobacteriaceae</taxon>
        <taxon>Escherichia</taxon>
    </lineage>
</organism>
<name>PPDC_ECOLI</name>